<dbReference type="PIR" id="JX0084">
    <property type="entry name" value="JX0084"/>
</dbReference>
<dbReference type="SMR" id="P14936"/>
<dbReference type="Proteomes" id="UP000504610">
    <property type="component" value="Unplaced"/>
</dbReference>
<dbReference type="GO" id="GO:0009507">
    <property type="term" value="C:chloroplast"/>
    <property type="evidence" value="ECO:0007669"/>
    <property type="project" value="UniProtKB-SubCell"/>
</dbReference>
<dbReference type="GO" id="GO:0051537">
    <property type="term" value="F:2 iron, 2 sulfur cluster binding"/>
    <property type="evidence" value="ECO:0007669"/>
    <property type="project" value="UniProtKB-KW"/>
</dbReference>
<dbReference type="GO" id="GO:0009055">
    <property type="term" value="F:electron transfer activity"/>
    <property type="evidence" value="ECO:0007669"/>
    <property type="project" value="InterPro"/>
</dbReference>
<dbReference type="GO" id="GO:0046872">
    <property type="term" value="F:metal ion binding"/>
    <property type="evidence" value="ECO:0007669"/>
    <property type="project" value="UniProtKB-KW"/>
</dbReference>
<dbReference type="GO" id="GO:0022900">
    <property type="term" value="P:electron transport chain"/>
    <property type="evidence" value="ECO:0007669"/>
    <property type="project" value="InterPro"/>
</dbReference>
<dbReference type="CDD" id="cd00207">
    <property type="entry name" value="fer2"/>
    <property type="match status" value="1"/>
</dbReference>
<dbReference type="FunFam" id="3.10.20.30:FF:000014">
    <property type="entry name" value="Ferredoxin"/>
    <property type="match status" value="1"/>
</dbReference>
<dbReference type="Gene3D" id="3.10.20.30">
    <property type="match status" value="1"/>
</dbReference>
<dbReference type="InterPro" id="IPR036010">
    <property type="entry name" value="2Fe-2S_ferredoxin-like_sf"/>
</dbReference>
<dbReference type="InterPro" id="IPR001041">
    <property type="entry name" value="2Fe-2S_ferredoxin-type"/>
</dbReference>
<dbReference type="InterPro" id="IPR006058">
    <property type="entry name" value="2Fe2S_fd_BS"/>
</dbReference>
<dbReference type="InterPro" id="IPR012675">
    <property type="entry name" value="Beta-grasp_dom_sf"/>
</dbReference>
<dbReference type="InterPro" id="IPR010241">
    <property type="entry name" value="Fd_pln"/>
</dbReference>
<dbReference type="NCBIfam" id="TIGR02008">
    <property type="entry name" value="fdx_plant"/>
    <property type="match status" value="1"/>
</dbReference>
<dbReference type="PANTHER" id="PTHR43112">
    <property type="entry name" value="FERREDOXIN"/>
    <property type="match status" value="1"/>
</dbReference>
<dbReference type="PANTHER" id="PTHR43112:SF30">
    <property type="entry name" value="FERREDOXIN-3, CHLOROPLASTIC"/>
    <property type="match status" value="1"/>
</dbReference>
<dbReference type="Pfam" id="PF00111">
    <property type="entry name" value="Fer2"/>
    <property type="match status" value="1"/>
</dbReference>
<dbReference type="SUPFAM" id="SSF54292">
    <property type="entry name" value="2Fe-2S ferredoxin-like"/>
    <property type="match status" value="1"/>
</dbReference>
<dbReference type="PROSITE" id="PS00197">
    <property type="entry name" value="2FE2S_FER_1"/>
    <property type="match status" value="1"/>
</dbReference>
<dbReference type="PROSITE" id="PS51085">
    <property type="entry name" value="2FE2S_FER_2"/>
    <property type="match status" value="1"/>
</dbReference>
<feature type="chain" id="PRO_0000189358" description="Ferredoxin, root R-B1">
    <location>
        <begin position="1"/>
        <end position="98"/>
    </location>
</feature>
<feature type="domain" description="2Fe-2S ferredoxin-type" evidence="1">
    <location>
        <begin position="4"/>
        <end position="95"/>
    </location>
</feature>
<feature type="binding site" evidence="1">
    <location>
        <position position="41"/>
    </location>
    <ligand>
        <name>[2Fe-2S] cluster</name>
        <dbReference type="ChEBI" id="CHEBI:190135"/>
    </ligand>
</feature>
<feature type="binding site" evidence="1">
    <location>
        <position position="46"/>
    </location>
    <ligand>
        <name>[2Fe-2S] cluster</name>
        <dbReference type="ChEBI" id="CHEBI:190135"/>
    </ligand>
</feature>
<feature type="binding site" evidence="1">
    <location>
        <position position="49"/>
    </location>
    <ligand>
        <name>[2Fe-2S] cluster</name>
        <dbReference type="ChEBI" id="CHEBI:190135"/>
    </ligand>
</feature>
<feature type="binding site" evidence="1">
    <location>
        <position position="79"/>
    </location>
    <ligand>
        <name>[2Fe-2S] cluster</name>
        <dbReference type="ChEBI" id="CHEBI:190135"/>
    </ligand>
</feature>
<feature type="sequence variant">
    <original>I</original>
    <variation>V</variation>
    <location>
        <position position="9"/>
    </location>
</feature>
<feature type="sequence variant">
    <original>D</original>
    <variation>E</variation>
    <location>
        <position position="19"/>
    </location>
</feature>
<organism>
    <name type="scientific">Raphanus sativus</name>
    <name type="common">Radish</name>
    <name type="synonym">Raphanus raphanistrum var. sativus</name>
    <dbReference type="NCBI Taxonomy" id="3726"/>
    <lineage>
        <taxon>Eukaryota</taxon>
        <taxon>Viridiplantae</taxon>
        <taxon>Streptophyta</taxon>
        <taxon>Embryophyta</taxon>
        <taxon>Tracheophyta</taxon>
        <taxon>Spermatophyta</taxon>
        <taxon>Magnoliopsida</taxon>
        <taxon>eudicotyledons</taxon>
        <taxon>Gunneridae</taxon>
        <taxon>Pentapetalae</taxon>
        <taxon>rosids</taxon>
        <taxon>malvids</taxon>
        <taxon>Brassicales</taxon>
        <taxon>Brassicaceae</taxon>
        <taxon>Brassiceae</taxon>
        <taxon>Raphanus</taxon>
    </lineage>
</organism>
<reference key="1">
    <citation type="journal article" date="1989" name="J. Biochem.">
        <title>Amino acid sequences of ferredoxin isoproteins from radish roots.</title>
        <authorList>
            <person name="Wada K."/>
            <person name="Onda M."/>
            <person name="Matsubara H."/>
        </authorList>
    </citation>
    <scope>PROTEIN SEQUENCE</scope>
    <source>
        <strain>cv. Acantiformis Miyashige</strain>
        <tissue>White-root</tissue>
    </source>
</reference>
<name>FER1_RAPSA</name>
<comment type="function">
    <text>Ferredoxins are iron-sulfur proteins that transfer electrons in a wide variety of metabolic reactions.</text>
</comment>
<comment type="cofactor">
    <cofactor>
        <name>[2Fe-2S] cluster</name>
        <dbReference type="ChEBI" id="CHEBI:190135"/>
    </cofactor>
    <text>Binds 1 [2Fe-2S] cluster.</text>
</comment>
<comment type="subcellular location">
    <subcellularLocation>
        <location>Plastid</location>
        <location>Chloroplast</location>
    </subcellularLocation>
</comment>
<comment type="miscellaneous">
    <text>In radish there are 4 ferredoxins: 2 are root-specific (R-B1 and R-B2), one is present in both leaves and roots (L-A), and there is a minor form which is leaf specific (L-B).</text>
</comment>
<comment type="similarity">
    <text evidence="2">Belongs to the 2Fe2S plant-type ferredoxin family.</text>
</comment>
<accession>P14936</accession>
<evidence type="ECO:0000255" key="1">
    <source>
        <dbReference type="PROSITE-ProRule" id="PRU00465"/>
    </source>
</evidence>
<evidence type="ECO:0000305" key="2"/>
<keyword id="KW-0001">2Fe-2S</keyword>
<keyword id="KW-0150">Chloroplast</keyword>
<keyword id="KW-0903">Direct protein sequencing</keyword>
<keyword id="KW-0249">Electron transport</keyword>
<keyword id="KW-0408">Iron</keyword>
<keyword id="KW-0411">Iron-sulfur</keyword>
<keyword id="KW-0479">Metal-binding</keyword>
<keyword id="KW-0934">Plastid</keyword>
<keyword id="KW-1185">Reference proteome</keyword>
<keyword id="KW-0813">Transport</keyword>
<sequence length="98" mass="10783">SAVYKVKLIGPDGQENEFDVPDDQYILDAAEEAGVDLPYSCRAGACSTCAGKIEKGQVDQSDGSFLEDHHFEKGYVLTCVAYPQSDLVIHTHKEEELF</sequence>
<proteinExistence type="evidence at protein level"/>
<protein>
    <recommendedName>
        <fullName>Ferredoxin, root R-B1</fullName>
    </recommendedName>
</protein>